<accession>P59760</accession>
<evidence type="ECO:0000305" key="1"/>
<comment type="function">
    <text>Manifests poly C-specific RNase activity toward yeast tRNA, elicits a dose-dependent inhibition of cell-free translation, inhibits formation of superoxide ions in vitro and inhibits the hemagglutinating activities of soybean lectin and Ricinus communis agglutinin 120. Inhibits HIV-1 reverse transcriptase.</text>
</comment>
<comment type="subcellular location">
    <subcellularLocation>
        <location>Secreted</location>
    </subcellularLocation>
</comment>
<comment type="tissue specificity">
    <text>Milk.</text>
</comment>
<comment type="PTM">
    <text>Glycosylated.</text>
</comment>
<comment type="similarity">
    <text evidence="1">Belongs to the pancreatic ribonuclease family.</text>
</comment>
<sequence length="49" mass="5574">SALYALYDFSPPARKMRAYTVRAYVHGSYSRRGPWYDFEPVPGASMDGL</sequence>
<reference key="1">
    <citation type="journal article" date="1999" name="Biochem. Biophys. Res. Commun.">
        <title>Isolation and characterization of angiogenin-1 and a novel protein designated lactogenin from bovine milk.</title>
        <authorList>
            <person name="Ye X.Y."/>
            <person name="Cheng K.J."/>
            <person name="Ng T.B."/>
        </authorList>
    </citation>
    <scope>PROTEIN SEQUENCE</scope>
    <scope>CHARACTERIZATION</scope>
    <source>
        <tissue>Milk</tissue>
    </source>
</reference>
<reference key="2">
    <citation type="journal article" date="2000" name="Life Sci.">
        <title>First demonstration of an inhibitory activity of milk proteins against human immunodeficiency virus-1 reverse transcriptase and the effect of succinylation.</title>
        <authorList>
            <person name="Wang H."/>
            <person name="Ye X.Y."/>
            <person name="Ng T.B."/>
        </authorList>
    </citation>
    <scope>INHIBITION OF HIV-1 REVERSE TRANSCRIPTASE</scope>
</reference>
<dbReference type="EC" id="3.1.27.-"/>
<dbReference type="InParanoid" id="P59760"/>
<dbReference type="Proteomes" id="UP000009136">
    <property type="component" value="Unplaced"/>
</dbReference>
<dbReference type="GO" id="GO:0005576">
    <property type="term" value="C:extracellular region"/>
    <property type="evidence" value="ECO:0007669"/>
    <property type="project" value="UniProtKB-SubCell"/>
</dbReference>
<dbReference type="GO" id="GO:0016209">
    <property type="term" value="F:antioxidant activity"/>
    <property type="evidence" value="ECO:0007669"/>
    <property type="project" value="UniProtKB-KW"/>
</dbReference>
<dbReference type="GO" id="GO:0004519">
    <property type="term" value="F:endonuclease activity"/>
    <property type="evidence" value="ECO:0007669"/>
    <property type="project" value="UniProtKB-KW"/>
</dbReference>
<dbReference type="GO" id="GO:0051607">
    <property type="term" value="P:defense response to virus"/>
    <property type="evidence" value="ECO:0007669"/>
    <property type="project" value="UniProtKB-KW"/>
</dbReference>
<dbReference type="GO" id="GO:0017148">
    <property type="term" value="P:negative regulation of translation"/>
    <property type="evidence" value="ECO:0007669"/>
    <property type="project" value="UniProtKB-KW"/>
</dbReference>
<feature type="chain" id="PRO_0000057217" description="Glycolactin">
    <location>
        <begin position="1"/>
        <end position="49" status="greater than"/>
    </location>
</feature>
<feature type="non-consecutive residues" evidence="1">
    <location>
        <begin position="29"/>
        <end position="30"/>
    </location>
</feature>
<feature type="non-consecutive residues" evidence="1">
    <location>
        <begin position="39"/>
        <end position="40"/>
    </location>
</feature>
<feature type="non-terminal residue">
    <location>
        <position position="49"/>
    </location>
</feature>
<protein>
    <recommendedName>
        <fullName>Glycolactin</fullName>
        <ecNumber>3.1.27.-</ecNumber>
    </recommendedName>
</protein>
<keyword id="KW-0049">Antioxidant</keyword>
<keyword id="KW-0051">Antiviral defense</keyword>
<keyword id="KW-0903">Direct protein sequencing</keyword>
<keyword id="KW-0255">Endonuclease</keyword>
<keyword id="KW-0325">Glycoprotein</keyword>
<keyword id="KW-0378">Hydrolase</keyword>
<keyword id="KW-0540">Nuclease</keyword>
<keyword id="KW-0652">Protein synthesis inhibitor</keyword>
<keyword id="KW-1185">Reference proteome</keyword>
<keyword id="KW-0964">Secreted</keyword>
<name>GLYL_BOVIN</name>
<proteinExistence type="evidence at protein level"/>
<organism>
    <name type="scientific">Bos taurus</name>
    <name type="common">Bovine</name>
    <dbReference type="NCBI Taxonomy" id="9913"/>
    <lineage>
        <taxon>Eukaryota</taxon>
        <taxon>Metazoa</taxon>
        <taxon>Chordata</taxon>
        <taxon>Craniata</taxon>
        <taxon>Vertebrata</taxon>
        <taxon>Euteleostomi</taxon>
        <taxon>Mammalia</taxon>
        <taxon>Eutheria</taxon>
        <taxon>Laurasiatheria</taxon>
        <taxon>Artiodactyla</taxon>
        <taxon>Ruminantia</taxon>
        <taxon>Pecora</taxon>
        <taxon>Bovidae</taxon>
        <taxon>Bovinae</taxon>
        <taxon>Bos</taxon>
    </lineage>
</organism>